<sequence length="87" mass="9699">MSKGHSLQDPYLNVLRKERIPVSIYLVNGIKLQGQVESFDQFVVLLKNTVSQMVYKHAISTVVPSRPVRVPMLNPESTGNDDMESGA</sequence>
<keyword id="KW-1185">Reference proteome</keyword>
<keyword id="KW-0694">RNA-binding</keyword>
<keyword id="KW-0346">Stress response</keyword>
<gene>
    <name evidence="1" type="primary">hfq</name>
    <name type="ordered locus">TERTU_3558</name>
</gene>
<accession>C5BRH7</accession>
<organism>
    <name type="scientific">Teredinibacter turnerae (strain ATCC 39867 / T7901)</name>
    <dbReference type="NCBI Taxonomy" id="377629"/>
    <lineage>
        <taxon>Bacteria</taxon>
        <taxon>Pseudomonadati</taxon>
        <taxon>Pseudomonadota</taxon>
        <taxon>Gammaproteobacteria</taxon>
        <taxon>Cellvibrionales</taxon>
        <taxon>Cellvibrionaceae</taxon>
        <taxon>Teredinibacter</taxon>
    </lineage>
</organism>
<comment type="function">
    <text evidence="1">RNA chaperone that binds small regulatory RNA (sRNAs) and mRNAs to facilitate mRNA translational regulation in response to envelope stress, environmental stress and changes in metabolite concentrations. Also binds with high specificity to tRNAs.</text>
</comment>
<comment type="subunit">
    <text evidence="1">Homohexamer.</text>
</comment>
<comment type="similarity">
    <text evidence="1">Belongs to the Hfq family.</text>
</comment>
<dbReference type="EMBL" id="CP001614">
    <property type="protein sequence ID" value="ACR13497.1"/>
    <property type="molecule type" value="Genomic_DNA"/>
</dbReference>
<dbReference type="RefSeq" id="WP_015819611.1">
    <property type="nucleotide sequence ID" value="NC_012997.1"/>
</dbReference>
<dbReference type="SMR" id="C5BRH7"/>
<dbReference type="STRING" id="377629.TERTU_3558"/>
<dbReference type="GeneID" id="58410905"/>
<dbReference type="GeneID" id="93855345"/>
<dbReference type="KEGG" id="ttu:TERTU_3558"/>
<dbReference type="eggNOG" id="COG1923">
    <property type="taxonomic scope" value="Bacteria"/>
</dbReference>
<dbReference type="HOGENOM" id="CLU_113688_2_2_6"/>
<dbReference type="OrthoDB" id="9799751at2"/>
<dbReference type="Proteomes" id="UP000009080">
    <property type="component" value="Chromosome"/>
</dbReference>
<dbReference type="GO" id="GO:0005829">
    <property type="term" value="C:cytosol"/>
    <property type="evidence" value="ECO:0007669"/>
    <property type="project" value="TreeGrafter"/>
</dbReference>
<dbReference type="GO" id="GO:0003723">
    <property type="term" value="F:RNA binding"/>
    <property type="evidence" value="ECO:0007669"/>
    <property type="project" value="UniProtKB-UniRule"/>
</dbReference>
<dbReference type="GO" id="GO:0006355">
    <property type="term" value="P:regulation of DNA-templated transcription"/>
    <property type="evidence" value="ECO:0007669"/>
    <property type="project" value="InterPro"/>
</dbReference>
<dbReference type="GO" id="GO:0043487">
    <property type="term" value="P:regulation of RNA stability"/>
    <property type="evidence" value="ECO:0007669"/>
    <property type="project" value="TreeGrafter"/>
</dbReference>
<dbReference type="GO" id="GO:0045974">
    <property type="term" value="P:regulation of translation, ncRNA-mediated"/>
    <property type="evidence" value="ECO:0007669"/>
    <property type="project" value="TreeGrafter"/>
</dbReference>
<dbReference type="CDD" id="cd01716">
    <property type="entry name" value="Hfq"/>
    <property type="match status" value="1"/>
</dbReference>
<dbReference type="FunFam" id="2.30.30.100:FF:000001">
    <property type="entry name" value="RNA-binding protein Hfq"/>
    <property type="match status" value="1"/>
</dbReference>
<dbReference type="Gene3D" id="2.30.30.100">
    <property type="match status" value="1"/>
</dbReference>
<dbReference type="HAMAP" id="MF_00436">
    <property type="entry name" value="Hfq"/>
    <property type="match status" value="1"/>
</dbReference>
<dbReference type="InterPro" id="IPR005001">
    <property type="entry name" value="Hfq"/>
</dbReference>
<dbReference type="InterPro" id="IPR010920">
    <property type="entry name" value="LSM_dom_sf"/>
</dbReference>
<dbReference type="InterPro" id="IPR047575">
    <property type="entry name" value="Sm"/>
</dbReference>
<dbReference type="NCBIfam" id="TIGR02383">
    <property type="entry name" value="Hfq"/>
    <property type="match status" value="1"/>
</dbReference>
<dbReference type="NCBIfam" id="NF001602">
    <property type="entry name" value="PRK00395.1"/>
    <property type="match status" value="1"/>
</dbReference>
<dbReference type="PANTHER" id="PTHR34772">
    <property type="entry name" value="RNA-BINDING PROTEIN HFQ"/>
    <property type="match status" value="1"/>
</dbReference>
<dbReference type="PANTHER" id="PTHR34772:SF1">
    <property type="entry name" value="RNA-BINDING PROTEIN HFQ"/>
    <property type="match status" value="1"/>
</dbReference>
<dbReference type="Pfam" id="PF17209">
    <property type="entry name" value="Hfq"/>
    <property type="match status" value="1"/>
</dbReference>
<dbReference type="SUPFAM" id="SSF50182">
    <property type="entry name" value="Sm-like ribonucleoproteins"/>
    <property type="match status" value="1"/>
</dbReference>
<dbReference type="PROSITE" id="PS52002">
    <property type="entry name" value="SM"/>
    <property type="match status" value="1"/>
</dbReference>
<proteinExistence type="inferred from homology"/>
<reference key="1">
    <citation type="journal article" date="2009" name="PLoS ONE">
        <title>The complete genome of Teredinibacter turnerae T7901: an intracellular endosymbiont of marine wood-boring bivalves (shipworms).</title>
        <authorList>
            <person name="Yang J.C."/>
            <person name="Madupu R."/>
            <person name="Durkin A.S."/>
            <person name="Ekborg N.A."/>
            <person name="Pedamallu C.S."/>
            <person name="Hostetler J.B."/>
            <person name="Radune D."/>
            <person name="Toms B.S."/>
            <person name="Henrissat B."/>
            <person name="Coutinho P.M."/>
            <person name="Schwarz S."/>
            <person name="Field L."/>
            <person name="Trindade-Silva A.E."/>
            <person name="Soares C.A.G."/>
            <person name="Elshahawi S."/>
            <person name="Hanora A."/>
            <person name="Schmidt E.W."/>
            <person name="Haygood M.G."/>
            <person name="Posfai J."/>
            <person name="Benner J."/>
            <person name="Madinger C."/>
            <person name="Nove J."/>
            <person name="Anton B."/>
            <person name="Chaudhary K."/>
            <person name="Foster J."/>
            <person name="Holman A."/>
            <person name="Kumar S."/>
            <person name="Lessard P.A."/>
            <person name="Luyten Y.A."/>
            <person name="Slatko B."/>
            <person name="Wood N."/>
            <person name="Wu B."/>
            <person name="Teplitski M."/>
            <person name="Mougous J.D."/>
            <person name="Ward N."/>
            <person name="Eisen J.A."/>
            <person name="Badger J.H."/>
            <person name="Distel D.L."/>
        </authorList>
    </citation>
    <scope>NUCLEOTIDE SEQUENCE [LARGE SCALE GENOMIC DNA]</scope>
    <source>
        <strain>ATCC 39867 / T7901</strain>
    </source>
</reference>
<feature type="chain" id="PRO_1000206105" description="RNA-binding protein Hfq">
    <location>
        <begin position="1"/>
        <end position="87"/>
    </location>
</feature>
<feature type="domain" description="Sm" evidence="2">
    <location>
        <begin position="9"/>
        <end position="68"/>
    </location>
</feature>
<protein>
    <recommendedName>
        <fullName evidence="1">RNA-binding protein Hfq</fullName>
    </recommendedName>
</protein>
<name>HFQ_TERTT</name>
<evidence type="ECO:0000255" key="1">
    <source>
        <dbReference type="HAMAP-Rule" id="MF_00436"/>
    </source>
</evidence>
<evidence type="ECO:0000255" key="2">
    <source>
        <dbReference type="PROSITE-ProRule" id="PRU01346"/>
    </source>
</evidence>